<comment type="function">
    <text evidence="1">One of the essential components for the initiation of protein synthesis. Stabilizes the binding of IF-2 and IF-3 on the 30S subunit to which N-formylmethionyl-tRNA(fMet) subsequently binds. Helps modulate mRNA selection, yielding the 30S pre-initiation complex (PIC). Upon addition of the 50S ribosomal subunit IF-1, IF-2 and IF-3 are released leaving the mature 70S translation initiation complex.</text>
</comment>
<comment type="subunit">
    <text evidence="1">Component of the 30S ribosomal translation pre-initiation complex which assembles on the 30S ribosome in the order IF-2 and IF-3, IF-1 and N-formylmethionyl-tRNA(fMet); mRNA recruitment can occur at any time during PIC assembly.</text>
</comment>
<comment type="subcellular location">
    <subcellularLocation>
        <location evidence="1">Cytoplasm</location>
    </subcellularLocation>
</comment>
<comment type="similarity">
    <text evidence="1">Belongs to the IF-1 family.</text>
</comment>
<comment type="sequence caution" evidence="2">
    <conflict type="erroneous initiation">
        <sequence resource="EMBL-CDS" id="AAX71179"/>
    </conflict>
    <text>Extended N-terminus.</text>
</comment>
<dbReference type="EMBL" id="CP000056">
    <property type="protein sequence ID" value="AAX71179.1"/>
    <property type="status" value="ALT_INIT"/>
    <property type="molecule type" value="Genomic_DNA"/>
</dbReference>
<dbReference type="RefSeq" id="WP_001040189.1">
    <property type="nucleotide sequence ID" value="NC_007296.2"/>
</dbReference>
<dbReference type="SMR" id="Q48VS7"/>
<dbReference type="GeneID" id="98392414"/>
<dbReference type="KEGG" id="spb:M28_Spy0065"/>
<dbReference type="HOGENOM" id="CLU_151267_1_0_9"/>
<dbReference type="GO" id="GO:0005829">
    <property type="term" value="C:cytosol"/>
    <property type="evidence" value="ECO:0007669"/>
    <property type="project" value="TreeGrafter"/>
</dbReference>
<dbReference type="GO" id="GO:0043022">
    <property type="term" value="F:ribosome binding"/>
    <property type="evidence" value="ECO:0007669"/>
    <property type="project" value="UniProtKB-UniRule"/>
</dbReference>
<dbReference type="GO" id="GO:0019843">
    <property type="term" value="F:rRNA binding"/>
    <property type="evidence" value="ECO:0007669"/>
    <property type="project" value="UniProtKB-UniRule"/>
</dbReference>
<dbReference type="GO" id="GO:0003743">
    <property type="term" value="F:translation initiation factor activity"/>
    <property type="evidence" value="ECO:0007669"/>
    <property type="project" value="UniProtKB-UniRule"/>
</dbReference>
<dbReference type="CDD" id="cd04451">
    <property type="entry name" value="S1_IF1"/>
    <property type="match status" value="1"/>
</dbReference>
<dbReference type="FunFam" id="2.40.50.140:FF:000002">
    <property type="entry name" value="Translation initiation factor IF-1"/>
    <property type="match status" value="1"/>
</dbReference>
<dbReference type="Gene3D" id="2.40.50.140">
    <property type="entry name" value="Nucleic acid-binding proteins"/>
    <property type="match status" value="1"/>
</dbReference>
<dbReference type="HAMAP" id="MF_00075">
    <property type="entry name" value="IF_1"/>
    <property type="match status" value="1"/>
</dbReference>
<dbReference type="InterPro" id="IPR012340">
    <property type="entry name" value="NA-bd_OB-fold"/>
</dbReference>
<dbReference type="InterPro" id="IPR006196">
    <property type="entry name" value="RNA-binding_domain_S1_IF1"/>
</dbReference>
<dbReference type="InterPro" id="IPR003029">
    <property type="entry name" value="S1_domain"/>
</dbReference>
<dbReference type="InterPro" id="IPR004368">
    <property type="entry name" value="TIF_IF1"/>
</dbReference>
<dbReference type="NCBIfam" id="TIGR00008">
    <property type="entry name" value="infA"/>
    <property type="match status" value="1"/>
</dbReference>
<dbReference type="PANTHER" id="PTHR33370">
    <property type="entry name" value="TRANSLATION INITIATION FACTOR IF-1, CHLOROPLASTIC"/>
    <property type="match status" value="1"/>
</dbReference>
<dbReference type="PANTHER" id="PTHR33370:SF1">
    <property type="entry name" value="TRANSLATION INITIATION FACTOR IF-1, CHLOROPLASTIC"/>
    <property type="match status" value="1"/>
</dbReference>
<dbReference type="Pfam" id="PF01176">
    <property type="entry name" value="eIF-1a"/>
    <property type="match status" value="1"/>
</dbReference>
<dbReference type="SMART" id="SM00316">
    <property type="entry name" value="S1"/>
    <property type="match status" value="1"/>
</dbReference>
<dbReference type="SUPFAM" id="SSF50249">
    <property type="entry name" value="Nucleic acid-binding proteins"/>
    <property type="match status" value="1"/>
</dbReference>
<dbReference type="PROSITE" id="PS50832">
    <property type="entry name" value="S1_IF1_TYPE"/>
    <property type="match status" value="1"/>
</dbReference>
<evidence type="ECO:0000255" key="1">
    <source>
        <dbReference type="HAMAP-Rule" id="MF_00075"/>
    </source>
</evidence>
<evidence type="ECO:0000305" key="2"/>
<organism>
    <name type="scientific">Streptococcus pyogenes serotype M28 (strain MGAS6180)</name>
    <dbReference type="NCBI Taxonomy" id="319701"/>
    <lineage>
        <taxon>Bacteria</taxon>
        <taxon>Bacillati</taxon>
        <taxon>Bacillota</taxon>
        <taxon>Bacilli</taxon>
        <taxon>Lactobacillales</taxon>
        <taxon>Streptococcaceae</taxon>
        <taxon>Streptococcus</taxon>
    </lineage>
</organism>
<gene>
    <name evidence="1" type="primary">infA</name>
    <name type="ordered locus">M28_Spy0065</name>
</gene>
<sequence>MAKEDVIEIEGKVVETMPNAMFTVELENGHQILATVSGKIRKNYIRILVGDRVTVEMSPYDLTRGRITYRFK</sequence>
<protein>
    <recommendedName>
        <fullName evidence="1">Translation initiation factor IF-1</fullName>
    </recommendedName>
</protein>
<accession>Q48VS7</accession>
<feature type="chain" id="PRO_0000263885" description="Translation initiation factor IF-1">
    <location>
        <begin position="1"/>
        <end position="72"/>
    </location>
</feature>
<feature type="domain" description="S1-like" evidence="1">
    <location>
        <begin position="1"/>
        <end position="72"/>
    </location>
</feature>
<name>IF1_STRPM</name>
<proteinExistence type="inferred from homology"/>
<reference key="1">
    <citation type="journal article" date="2005" name="J. Infect. Dis.">
        <title>Genome sequence of a serotype M28 strain of group A Streptococcus: potential new insights into puerperal sepsis and bacterial disease specificity.</title>
        <authorList>
            <person name="Green N.M."/>
            <person name="Zhang S."/>
            <person name="Porcella S.F."/>
            <person name="Nagiec M.J."/>
            <person name="Barbian K.D."/>
            <person name="Beres S.B."/>
            <person name="Lefebvre R.B."/>
            <person name="Musser J.M."/>
        </authorList>
    </citation>
    <scope>NUCLEOTIDE SEQUENCE [LARGE SCALE GENOMIC DNA]</scope>
    <source>
        <strain>MGAS6180</strain>
    </source>
</reference>
<keyword id="KW-0963">Cytoplasm</keyword>
<keyword id="KW-0396">Initiation factor</keyword>
<keyword id="KW-0648">Protein biosynthesis</keyword>
<keyword id="KW-0694">RNA-binding</keyword>
<keyword id="KW-0699">rRNA-binding</keyword>